<name>SUFE_PECCP</name>
<dbReference type="EMBL" id="CP001657">
    <property type="protein sequence ID" value="ACT13476.1"/>
    <property type="molecule type" value="Genomic_DNA"/>
</dbReference>
<dbReference type="RefSeq" id="WP_015840657.1">
    <property type="nucleotide sequence ID" value="NC_012917.1"/>
</dbReference>
<dbReference type="SMR" id="C6DKM5"/>
<dbReference type="STRING" id="561230.PC1_2445"/>
<dbReference type="GeneID" id="67794441"/>
<dbReference type="KEGG" id="pct:PC1_2445"/>
<dbReference type="eggNOG" id="COG2166">
    <property type="taxonomic scope" value="Bacteria"/>
</dbReference>
<dbReference type="HOGENOM" id="CLU_124502_1_1_6"/>
<dbReference type="OrthoDB" id="9799320at2"/>
<dbReference type="UniPathway" id="UPA00266"/>
<dbReference type="Proteomes" id="UP000002736">
    <property type="component" value="Chromosome"/>
</dbReference>
<dbReference type="GO" id="GO:0005737">
    <property type="term" value="C:cytoplasm"/>
    <property type="evidence" value="ECO:0007669"/>
    <property type="project" value="UniProtKB-SubCell"/>
</dbReference>
<dbReference type="GO" id="GO:0016226">
    <property type="term" value="P:iron-sulfur cluster assembly"/>
    <property type="evidence" value="ECO:0007669"/>
    <property type="project" value="InterPro"/>
</dbReference>
<dbReference type="GO" id="GO:0006790">
    <property type="term" value="P:sulfur compound metabolic process"/>
    <property type="evidence" value="ECO:0007669"/>
    <property type="project" value="InterPro"/>
</dbReference>
<dbReference type="Gene3D" id="3.90.1010.10">
    <property type="match status" value="1"/>
</dbReference>
<dbReference type="HAMAP" id="MF_01832">
    <property type="entry name" value="SufE"/>
    <property type="match status" value="1"/>
</dbReference>
<dbReference type="InterPro" id="IPR023939">
    <property type="entry name" value="Cysteine_desulfuration_SufE"/>
</dbReference>
<dbReference type="InterPro" id="IPR003808">
    <property type="entry name" value="Fe-S_metab-assoc_dom"/>
</dbReference>
<dbReference type="NCBIfam" id="NF006792">
    <property type="entry name" value="PRK09296.1"/>
    <property type="match status" value="1"/>
</dbReference>
<dbReference type="PANTHER" id="PTHR43597:SF3">
    <property type="entry name" value="CYSTEINE DESULFURATION PROTEIN SUFE"/>
    <property type="match status" value="1"/>
</dbReference>
<dbReference type="PANTHER" id="PTHR43597">
    <property type="entry name" value="SULFUR ACCEPTOR PROTEIN CSDE"/>
    <property type="match status" value="1"/>
</dbReference>
<dbReference type="Pfam" id="PF02657">
    <property type="entry name" value="SufE"/>
    <property type="match status" value="1"/>
</dbReference>
<dbReference type="SUPFAM" id="SSF82649">
    <property type="entry name" value="SufE/NifU"/>
    <property type="match status" value="1"/>
</dbReference>
<sequence>MASLPEPQKLARNFARCNDWEEKYLYIIELGERLDPLPDEWRNPDNLISGCQSQVWIVAQPDEQGVIVLHGDSDAAIVKGLIAVVFSLYQGLTAQEIVELDVRPFFESLALNQHLTPSRSQGLEAMLRAIRAHAAALL</sequence>
<gene>
    <name evidence="1" type="primary">sufE</name>
    <name type="ordered locus">PC1_2445</name>
</gene>
<evidence type="ECO:0000255" key="1">
    <source>
        <dbReference type="HAMAP-Rule" id="MF_01832"/>
    </source>
</evidence>
<keyword id="KW-0963">Cytoplasm</keyword>
<organism>
    <name type="scientific">Pectobacterium carotovorum subsp. carotovorum (strain PC1)</name>
    <dbReference type="NCBI Taxonomy" id="561230"/>
    <lineage>
        <taxon>Bacteria</taxon>
        <taxon>Pseudomonadati</taxon>
        <taxon>Pseudomonadota</taxon>
        <taxon>Gammaproteobacteria</taxon>
        <taxon>Enterobacterales</taxon>
        <taxon>Pectobacteriaceae</taxon>
        <taxon>Pectobacterium</taxon>
    </lineage>
</organism>
<comment type="function">
    <text evidence="1">Participates in cysteine desulfuration mediated by SufS. Cysteine desulfuration mobilizes sulfur from L-cysteine to yield L-alanine and constitutes an essential step in sulfur metabolism for biosynthesis of a variety of sulfur-containing biomolecules. Functions as a sulfur acceptor for SufS, by mediating the direct transfer of the sulfur atom from the S-sulfanylcysteine of SufS, an intermediate product of cysteine desulfuration process.</text>
</comment>
<comment type="pathway">
    <text evidence="1">Cofactor biosynthesis; iron-sulfur cluster biosynthesis.</text>
</comment>
<comment type="subunit">
    <text evidence="1">Homodimer. Interacts with SufS.</text>
</comment>
<comment type="subcellular location">
    <subcellularLocation>
        <location evidence="1">Cytoplasm</location>
    </subcellularLocation>
</comment>
<comment type="similarity">
    <text evidence="1">Belongs to the SufE family.</text>
</comment>
<reference key="1">
    <citation type="submission" date="2009-07" db="EMBL/GenBank/DDBJ databases">
        <title>Complete sequence of Pectobacterium carotovorum subsp. carotovorum PC1.</title>
        <authorList>
            <consortium name="US DOE Joint Genome Institute"/>
            <person name="Lucas S."/>
            <person name="Copeland A."/>
            <person name="Lapidus A."/>
            <person name="Glavina del Rio T."/>
            <person name="Tice H."/>
            <person name="Bruce D."/>
            <person name="Goodwin L."/>
            <person name="Pitluck S."/>
            <person name="Munk A.C."/>
            <person name="Brettin T."/>
            <person name="Detter J.C."/>
            <person name="Han C."/>
            <person name="Tapia R."/>
            <person name="Larimer F."/>
            <person name="Land M."/>
            <person name="Hauser L."/>
            <person name="Kyrpides N."/>
            <person name="Mikhailova N."/>
            <person name="Balakrishnan V."/>
            <person name="Glasner J."/>
            <person name="Perna N.T."/>
        </authorList>
    </citation>
    <scope>NUCLEOTIDE SEQUENCE [LARGE SCALE GENOMIC DNA]</scope>
    <source>
        <strain>PC1</strain>
    </source>
</reference>
<protein>
    <recommendedName>
        <fullName evidence="1">Cysteine desulfuration protein SufE</fullName>
    </recommendedName>
</protein>
<feature type="chain" id="PRO_1000216078" description="Cysteine desulfuration protein SufE">
    <location>
        <begin position="1"/>
        <end position="138"/>
    </location>
</feature>
<feature type="active site" description="Cysteine persulfide intermediate" evidence="1">
    <location>
        <position position="51"/>
    </location>
</feature>
<proteinExistence type="inferred from homology"/>
<accession>C6DKM5</accession>